<evidence type="ECO:0000250" key="1"/>
<evidence type="ECO:0000255" key="2">
    <source>
        <dbReference type="PROSITE-ProRule" id="PRU10095"/>
    </source>
</evidence>
<evidence type="ECO:0000269" key="3">
    <source>
    </source>
</evidence>
<evidence type="ECO:0000305" key="4"/>
<comment type="function">
    <text>Positive effector of glycogen accumulation. May be involved in nutrient-sensing.</text>
</comment>
<comment type="cofactor">
    <cofactor evidence="1">
        <name>Zn(2+)</name>
        <dbReference type="ChEBI" id="CHEBI:29105"/>
    </cofactor>
    <text evidence="1">Binds 1 zinc ion per subunit.</text>
</comment>
<comment type="miscellaneous">
    <text evidence="3">Present with 77000 molecules/cell in log phase SD medium.</text>
</comment>
<comment type="similarity">
    <text evidence="4">Belongs to the peptidase M1 family.</text>
</comment>
<accession>P37898</accession>
<accession>D3DKZ5</accession>
<name>AAP1_YEAST</name>
<keyword id="KW-0031">Aminopeptidase</keyword>
<keyword id="KW-0378">Hydrolase</keyword>
<keyword id="KW-0479">Metal-binding</keyword>
<keyword id="KW-0482">Metalloprotease</keyword>
<keyword id="KW-0645">Protease</keyword>
<keyword id="KW-1185">Reference proteome</keyword>
<keyword id="KW-0862">Zinc</keyword>
<sequence length="856" mass="97663">MSREVLPNNVTPLHYDITLEPNFRAFTFEGSLKIDLQINDHSINSVQINYLEIDFHSARIEGVNAIEVNKNENQQKATLVFPNGTFENLGPSAKLEIIFSGILNDQMAGFYRAKYTDKVTGETKYMATTQMEATDARRAFPCFDEPNLKATFAVTLVSESFLTHLSNMDVRNETIKEGKKYTTFNTTPKMSTYLVAFIVADLRYVESNNFRIPVRVYSTPGDEKFGQFAANLAARTLRFFEDTFNIEYPLPKMDMVAVHEFSAGAMENWGLVTYRVIDLLLDIENSSLDRIQRVAEVIQHELAHQWFGNLVTMDWWEGLWLNEGFATWMSWYSCNKFQPEWKVWEQYVTDNLQRALNLDSLRSSHPIEVPVNNADEINQIFDAISYSKGSSLLRMISKWLGEETFIKGVSQYLNKFKYGNAKTGDLWDALADASGKDVCSVMNIWTKRVGFPVLSVKEHKNKITLTQHRYLSTGDVKEEEDTTIYPILLALKDSTGIDNTLVLNEKSATFELKNEEFFKINGDQSGIFITSYSDERWAKLSKQANLLSVEDRVGLVADAKALSASGYTSTTNFLNLISNWKNEDSFVVWEQIINSLSALKSTWVFEPEDILNALDKFTLDLVLNKLSELGWNIGEDDSFAIQRLKVTLFSAACTSGNEKMQSIAVEMFEEYANGNKQAIPALFKAVVFNTVARLGGENNYEKIFNIYQNPVSSEEKIIALRALGRFEDKELLERTLSYLLDGTVLNQDFYIPMQGIRVHKKGIERLWAWMQEHWDEIAKRLQPGSPVLGGVLTLGLTNFTSFEALEKISAFYSRKVTKGFDQTLAQALDTIRSKAQWVSRDREIVATYLREHEYDQ</sequence>
<proteinExistence type="evidence at protein level"/>
<feature type="chain" id="PRO_0000095105" description="Alanine/arginine aminopeptidase">
    <location>
        <begin position="1"/>
        <end position="856"/>
    </location>
</feature>
<feature type="active site" description="Proton acceptor" evidence="2">
    <location>
        <position position="301"/>
    </location>
</feature>
<feature type="binding site" evidence="1">
    <location>
        <position position="132"/>
    </location>
    <ligand>
        <name>substrate</name>
    </ligand>
</feature>
<feature type="binding site" evidence="1">
    <location>
        <begin position="264"/>
        <end position="268"/>
    </location>
    <ligand>
        <name>substrate</name>
    </ligand>
</feature>
<feature type="binding site" evidence="2">
    <location>
        <position position="300"/>
    </location>
    <ligand>
        <name>Zn(2+)</name>
        <dbReference type="ChEBI" id="CHEBI:29105"/>
        <note>catalytic</note>
    </ligand>
</feature>
<feature type="binding site" evidence="2">
    <location>
        <position position="304"/>
    </location>
    <ligand>
        <name>Zn(2+)</name>
        <dbReference type="ChEBI" id="CHEBI:29105"/>
        <note>catalytic</note>
    </ligand>
</feature>
<feature type="binding site" evidence="2">
    <location>
        <position position="323"/>
    </location>
    <ligand>
        <name>Zn(2+)</name>
        <dbReference type="ChEBI" id="CHEBI:29105"/>
        <note>catalytic</note>
    </ligand>
</feature>
<feature type="site" description="Transition state stabilizer" evidence="1">
    <location>
        <position position="386"/>
    </location>
</feature>
<feature type="sequence conflict" description="In Ref. 2." evidence="4" ref="2">
    <location>
        <begin position="550"/>
        <end position="569"/>
    </location>
</feature>
<feature type="sequence conflict" description="In Ref. 2." evidence="4" ref="2">
    <original>V</original>
    <variation>E</variation>
    <location>
        <position position="646"/>
    </location>
</feature>
<organism>
    <name type="scientific">Saccharomyces cerevisiae (strain ATCC 204508 / S288c)</name>
    <name type="common">Baker's yeast</name>
    <dbReference type="NCBI Taxonomy" id="559292"/>
    <lineage>
        <taxon>Eukaryota</taxon>
        <taxon>Fungi</taxon>
        <taxon>Dikarya</taxon>
        <taxon>Ascomycota</taxon>
        <taxon>Saccharomycotina</taxon>
        <taxon>Saccharomycetes</taxon>
        <taxon>Saccharomycetales</taxon>
        <taxon>Saccharomycetaceae</taxon>
        <taxon>Saccharomyces</taxon>
    </lineage>
</organism>
<reference key="1">
    <citation type="journal article" date="1993" name="J. Biol. Chem.">
        <title>Isolation and characterization of AAP1. A gene encoding an alanine/arginine aminopeptidase in yeast.</title>
        <authorList>
            <person name="Caprioglio D.R."/>
            <person name="Padilla C."/>
            <person name="Werner-Washburne M."/>
        </authorList>
    </citation>
    <scope>NUCLEOTIDE SEQUENCE [GENOMIC DNA] OF 107-652</scope>
</reference>
<reference key="2">
    <citation type="journal article" date="1994" name="Science">
        <title>Complete nucleotide sequence of Saccharomyces cerevisiae chromosome VIII.</title>
        <authorList>
            <person name="Johnston M."/>
            <person name="Andrews S."/>
            <person name="Brinkman R."/>
            <person name="Cooper J."/>
            <person name="Ding H."/>
            <person name="Dover J."/>
            <person name="Du Z."/>
            <person name="Favello A."/>
            <person name="Fulton L."/>
            <person name="Gattung S."/>
            <person name="Geisel C."/>
            <person name="Kirsten J."/>
            <person name="Kucaba T."/>
            <person name="Hillier L.W."/>
            <person name="Jier M."/>
            <person name="Johnston L."/>
            <person name="Langston Y."/>
            <person name="Latreille P."/>
            <person name="Louis E.J."/>
            <person name="Macri C."/>
            <person name="Mardis E."/>
            <person name="Menezes S."/>
            <person name="Mouser L."/>
            <person name="Nhan M."/>
            <person name="Rifkin L."/>
            <person name="Riles L."/>
            <person name="St Peter H."/>
            <person name="Trevaskis E."/>
            <person name="Vaughan K."/>
            <person name="Vignati D."/>
            <person name="Wilcox L."/>
            <person name="Wohldman P."/>
            <person name="Waterston R."/>
            <person name="Wilson R."/>
            <person name="Vaudin M."/>
        </authorList>
    </citation>
    <scope>NUCLEOTIDE SEQUENCE [LARGE SCALE GENOMIC DNA]</scope>
    <source>
        <strain>ATCC 204508 / S288c</strain>
    </source>
</reference>
<reference key="3">
    <citation type="journal article" date="2014" name="G3 (Bethesda)">
        <title>The reference genome sequence of Saccharomyces cerevisiae: Then and now.</title>
        <authorList>
            <person name="Engel S.R."/>
            <person name="Dietrich F.S."/>
            <person name="Fisk D.G."/>
            <person name="Binkley G."/>
            <person name="Balakrishnan R."/>
            <person name="Costanzo M.C."/>
            <person name="Dwight S.S."/>
            <person name="Hitz B.C."/>
            <person name="Karra K."/>
            <person name="Nash R.S."/>
            <person name="Weng S."/>
            <person name="Wong E.D."/>
            <person name="Lloyd P."/>
            <person name="Skrzypek M.S."/>
            <person name="Miyasato S.R."/>
            <person name="Simison M."/>
            <person name="Cherry J.M."/>
        </authorList>
    </citation>
    <scope>GENOME REANNOTATION</scope>
    <source>
        <strain>ATCC 204508 / S288c</strain>
    </source>
</reference>
<reference key="4">
    <citation type="journal article" date="2003" name="Nature">
        <title>Global analysis of protein expression in yeast.</title>
        <authorList>
            <person name="Ghaemmaghami S."/>
            <person name="Huh W.-K."/>
            <person name="Bower K."/>
            <person name="Howson R.W."/>
            <person name="Belle A."/>
            <person name="Dephoure N."/>
            <person name="O'Shea E.K."/>
            <person name="Weissman J.S."/>
        </authorList>
    </citation>
    <scope>LEVEL OF PROTEIN EXPRESSION [LARGE SCALE ANALYSIS]</scope>
</reference>
<gene>
    <name type="primary">AAP1</name>
    <name type="ordered locus">YHR047C</name>
</gene>
<protein>
    <recommendedName>
        <fullName>Alanine/arginine aminopeptidase</fullName>
        <ecNumber>3.4.11.-</ecNumber>
    </recommendedName>
</protein>
<dbReference type="EC" id="3.4.11.-"/>
<dbReference type="EMBL" id="L12542">
    <property type="status" value="NOT_ANNOTATED_CDS"/>
    <property type="molecule type" value="Genomic_DNA"/>
</dbReference>
<dbReference type="EMBL" id="U00062">
    <property type="protein sequence ID" value="AAB68919.1"/>
    <property type="molecule type" value="Genomic_DNA"/>
</dbReference>
<dbReference type="EMBL" id="BK006934">
    <property type="protein sequence ID" value="DAA06739.1"/>
    <property type="molecule type" value="Genomic_DNA"/>
</dbReference>
<dbReference type="PIR" id="S46750">
    <property type="entry name" value="S46750"/>
</dbReference>
<dbReference type="RefSeq" id="NP_011913.1">
    <property type="nucleotide sequence ID" value="NM_001179177.1"/>
</dbReference>
<dbReference type="SMR" id="P37898"/>
<dbReference type="BioGRID" id="36479">
    <property type="interactions" value="56"/>
</dbReference>
<dbReference type="DIP" id="DIP-6698N"/>
<dbReference type="FunCoup" id="P37898">
    <property type="interactions" value="1076"/>
</dbReference>
<dbReference type="IntAct" id="P37898">
    <property type="interactions" value="131"/>
</dbReference>
<dbReference type="MINT" id="P37898"/>
<dbReference type="STRING" id="4932.YHR047C"/>
<dbReference type="MEROPS" id="M01.007"/>
<dbReference type="iPTMnet" id="P37898"/>
<dbReference type="PaxDb" id="4932-YHR047C"/>
<dbReference type="PeptideAtlas" id="P37898"/>
<dbReference type="EnsemblFungi" id="YHR047C_mRNA">
    <property type="protein sequence ID" value="YHR047C"/>
    <property type="gene ID" value="YHR047C"/>
</dbReference>
<dbReference type="GeneID" id="856443"/>
<dbReference type="KEGG" id="sce:YHR047C"/>
<dbReference type="AGR" id="SGD:S000001089"/>
<dbReference type="SGD" id="S000001089">
    <property type="gene designation" value="AAP1"/>
</dbReference>
<dbReference type="VEuPathDB" id="FungiDB:YHR047C"/>
<dbReference type="eggNOG" id="KOG1046">
    <property type="taxonomic scope" value="Eukaryota"/>
</dbReference>
<dbReference type="GeneTree" id="ENSGT00940000155246"/>
<dbReference type="HOGENOM" id="CLU_003705_0_1_1"/>
<dbReference type="InParanoid" id="P37898"/>
<dbReference type="OMA" id="AWDFIQV"/>
<dbReference type="OrthoDB" id="10031169at2759"/>
<dbReference type="BioCyc" id="YEAST:G3O-31102-MONOMER"/>
<dbReference type="BioGRID-ORCS" id="856443">
    <property type="hits" value="1 hit in 10 CRISPR screens"/>
</dbReference>
<dbReference type="PRO" id="PR:P37898"/>
<dbReference type="Proteomes" id="UP000002311">
    <property type="component" value="Chromosome VIII"/>
</dbReference>
<dbReference type="RNAct" id="P37898">
    <property type="molecule type" value="protein"/>
</dbReference>
<dbReference type="GO" id="GO:0005737">
    <property type="term" value="C:cytoplasm"/>
    <property type="evidence" value="ECO:0007005"/>
    <property type="project" value="SGD"/>
</dbReference>
<dbReference type="GO" id="GO:0005615">
    <property type="term" value="C:extracellular space"/>
    <property type="evidence" value="ECO:0000318"/>
    <property type="project" value="GO_Central"/>
</dbReference>
<dbReference type="GO" id="GO:0016020">
    <property type="term" value="C:membrane"/>
    <property type="evidence" value="ECO:0000318"/>
    <property type="project" value="GO_Central"/>
</dbReference>
<dbReference type="GO" id="GO:0005634">
    <property type="term" value="C:nucleus"/>
    <property type="evidence" value="ECO:0007005"/>
    <property type="project" value="SGD"/>
</dbReference>
<dbReference type="GO" id="GO:0004177">
    <property type="term" value="F:aminopeptidase activity"/>
    <property type="evidence" value="ECO:0000315"/>
    <property type="project" value="SGD"/>
</dbReference>
<dbReference type="GO" id="GO:0070006">
    <property type="term" value="F:metalloaminopeptidase activity"/>
    <property type="evidence" value="ECO:0000318"/>
    <property type="project" value="GO_Central"/>
</dbReference>
<dbReference type="GO" id="GO:0042277">
    <property type="term" value="F:peptide binding"/>
    <property type="evidence" value="ECO:0000318"/>
    <property type="project" value="GO_Central"/>
</dbReference>
<dbReference type="GO" id="GO:0008270">
    <property type="term" value="F:zinc ion binding"/>
    <property type="evidence" value="ECO:0000318"/>
    <property type="project" value="GO_Central"/>
</dbReference>
<dbReference type="GO" id="GO:0005977">
    <property type="term" value="P:glycogen metabolic process"/>
    <property type="evidence" value="ECO:0000315"/>
    <property type="project" value="SGD"/>
</dbReference>
<dbReference type="GO" id="GO:0043171">
    <property type="term" value="P:peptide catabolic process"/>
    <property type="evidence" value="ECO:0000318"/>
    <property type="project" value="GO_Central"/>
</dbReference>
<dbReference type="GO" id="GO:0006508">
    <property type="term" value="P:proteolysis"/>
    <property type="evidence" value="ECO:0000315"/>
    <property type="project" value="SGD"/>
</dbReference>
<dbReference type="CDD" id="cd09601">
    <property type="entry name" value="M1_APN-Q_like"/>
    <property type="match status" value="1"/>
</dbReference>
<dbReference type="FunFam" id="1.10.390.10:FF:000001">
    <property type="entry name" value="Aminopeptidase"/>
    <property type="match status" value="1"/>
</dbReference>
<dbReference type="FunFam" id="1.25.50.20:FF:000002">
    <property type="entry name" value="Aminopeptidase"/>
    <property type="match status" value="1"/>
</dbReference>
<dbReference type="FunFam" id="2.60.40.1730:FF:000002">
    <property type="entry name" value="Aminopeptidase"/>
    <property type="match status" value="1"/>
</dbReference>
<dbReference type="FunFam" id="2.60.40.1910:FF:000004">
    <property type="entry name" value="Aminopeptidase"/>
    <property type="match status" value="1"/>
</dbReference>
<dbReference type="Gene3D" id="1.25.50.20">
    <property type="match status" value="1"/>
</dbReference>
<dbReference type="Gene3D" id="2.60.40.1910">
    <property type="match status" value="1"/>
</dbReference>
<dbReference type="Gene3D" id="1.10.390.10">
    <property type="entry name" value="Neutral Protease Domain 2"/>
    <property type="match status" value="1"/>
</dbReference>
<dbReference type="Gene3D" id="2.60.40.1730">
    <property type="entry name" value="tricorn interacting facor f3 domain"/>
    <property type="match status" value="1"/>
</dbReference>
<dbReference type="InterPro" id="IPR045357">
    <property type="entry name" value="Aminopeptidase_N-like_N"/>
</dbReference>
<dbReference type="InterPro" id="IPR042097">
    <property type="entry name" value="Aminopeptidase_N-like_N_sf"/>
</dbReference>
<dbReference type="InterPro" id="IPR024571">
    <property type="entry name" value="ERAP1-like_C_dom"/>
</dbReference>
<dbReference type="InterPro" id="IPR034016">
    <property type="entry name" value="M1_APN-typ"/>
</dbReference>
<dbReference type="InterPro" id="IPR001930">
    <property type="entry name" value="Peptidase_M1"/>
</dbReference>
<dbReference type="InterPro" id="IPR050344">
    <property type="entry name" value="Peptidase_M1_aminopeptidases"/>
</dbReference>
<dbReference type="InterPro" id="IPR014782">
    <property type="entry name" value="Peptidase_M1_dom"/>
</dbReference>
<dbReference type="InterPro" id="IPR027268">
    <property type="entry name" value="Peptidase_M4/M1_CTD_sf"/>
</dbReference>
<dbReference type="PANTHER" id="PTHR11533">
    <property type="entry name" value="PROTEASE M1 ZINC METALLOPROTEASE"/>
    <property type="match status" value="1"/>
</dbReference>
<dbReference type="PANTHER" id="PTHR11533:SF174">
    <property type="entry name" value="PUROMYCIN-SENSITIVE AMINOPEPTIDASE-RELATED"/>
    <property type="match status" value="1"/>
</dbReference>
<dbReference type="Pfam" id="PF11838">
    <property type="entry name" value="ERAP1_C"/>
    <property type="match status" value="1"/>
</dbReference>
<dbReference type="Pfam" id="PF01433">
    <property type="entry name" value="Peptidase_M1"/>
    <property type="match status" value="1"/>
</dbReference>
<dbReference type="Pfam" id="PF17900">
    <property type="entry name" value="Peptidase_M1_N"/>
    <property type="match status" value="1"/>
</dbReference>
<dbReference type="PRINTS" id="PR00756">
    <property type="entry name" value="ALADIPTASE"/>
</dbReference>
<dbReference type="SUPFAM" id="SSF63737">
    <property type="entry name" value="Leukotriene A4 hydrolase N-terminal domain"/>
    <property type="match status" value="1"/>
</dbReference>
<dbReference type="SUPFAM" id="SSF55486">
    <property type="entry name" value="Metalloproteases ('zincins'), catalytic domain"/>
    <property type="match status" value="1"/>
</dbReference>
<dbReference type="PROSITE" id="PS00142">
    <property type="entry name" value="ZINC_PROTEASE"/>
    <property type="match status" value="1"/>
</dbReference>